<organism>
    <name type="scientific">Rattus norvegicus</name>
    <name type="common">Rat</name>
    <dbReference type="NCBI Taxonomy" id="10116"/>
    <lineage>
        <taxon>Eukaryota</taxon>
        <taxon>Metazoa</taxon>
        <taxon>Chordata</taxon>
        <taxon>Craniata</taxon>
        <taxon>Vertebrata</taxon>
        <taxon>Euteleostomi</taxon>
        <taxon>Mammalia</taxon>
        <taxon>Eutheria</taxon>
        <taxon>Euarchontoglires</taxon>
        <taxon>Glires</taxon>
        <taxon>Rodentia</taxon>
        <taxon>Myomorpha</taxon>
        <taxon>Muroidea</taxon>
        <taxon>Muridae</taxon>
        <taxon>Murinae</taxon>
        <taxon>Rattus</taxon>
    </lineage>
</organism>
<name>NTCP4_RAT</name>
<protein>
    <recommendedName>
        <fullName>Sodium/bile acid cotransporter 4</fullName>
    </recommendedName>
    <alternativeName>
        <fullName>Na(+)/bile acid cotransporter 4</fullName>
    </alternativeName>
    <alternativeName>
        <fullName>Solute carrier family 10 member 4</fullName>
    </alternativeName>
</protein>
<reference key="1">
    <citation type="submission" date="2004-08" db="EMBL/GenBank/DDBJ databases">
        <title>Identification of a novel bile acid transporter in rat, Slc10a4.</title>
        <authorList>
            <person name="Mikkaichi T."/>
            <person name="Abe T."/>
            <person name="Hishinuma T."/>
            <person name="Goto J."/>
        </authorList>
    </citation>
    <scope>NUCLEOTIDE SEQUENCE [MRNA]</scope>
</reference>
<reference key="2">
    <citation type="journal article" date="2008" name="Neuroscience">
        <title>Cloning and molecular characterization of the orphan carrier protein Slc10a4: expression in cholinergic neurons of the rat central nervous system.</title>
        <authorList>
            <person name="Geyer J."/>
            <person name="Fernandes C.F."/>
            <person name="Doring B."/>
            <person name="Burger S."/>
            <person name="Godoy J.R."/>
            <person name="Rafalzik S."/>
            <person name="Hubschle T."/>
            <person name="Gerstberger R."/>
            <person name="Petzinger E."/>
        </authorList>
    </citation>
    <scope>NUCLEOTIDE SEQUENCE [MRNA]</scope>
    <scope>TOPOLOGY</scope>
    <scope>TISSUE SPECIFICITY</scope>
    <source>
        <strain>Wistar</strain>
        <tissue>Adrenal gland</tissue>
    </source>
</reference>
<evidence type="ECO:0000250" key="1"/>
<evidence type="ECO:0000255" key="2"/>
<evidence type="ECO:0000256" key="3">
    <source>
        <dbReference type="SAM" id="MobiDB-lite"/>
    </source>
</evidence>
<evidence type="ECO:0000269" key="4">
    <source>
    </source>
</evidence>
<evidence type="ECO:0000305" key="5"/>
<feature type="chain" id="PRO_0000263744" description="Sodium/bile acid cotransporter 4">
    <location>
        <begin position="1"/>
        <end position="437"/>
    </location>
</feature>
<feature type="topological domain" description="Extracellular" evidence="2">
    <location>
        <begin position="1"/>
        <end position="103"/>
    </location>
</feature>
<feature type="transmembrane region" description="Helical" evidence="2">
    <location>
        <begin position="104"/>
        <end position="124"/>
    </location>
</feature>
<feature type="topological domain" description="Cytoplasmic" evidence="2">
    <location>
        <begin position="125"/>
        <end position="140"/>
    </location>
</feature>
<feature type="transmembrane region" description="Helical" evidence="2">
    <location>
        <begin position="141"/>
        <end position="161"/>
    </location>
</feature>
<feature type="topological domain" description="Extracellular" evidence="2">
    <location>
        <begin position="162"/>
        <end position="197"/>
    </location>
</feature>
<feature type="transmembrane region" description="Helical" evidence="2">
    <location>
        <begin position="198"/>
        <end position="218"/>
    </location>
</feature>
<feature type="topological domain" description="Cytoplasmic" evidence="2">
    <location>
        <begin position="219"/>
        <end position="233"/>
    </location>
</feature>
<feature type="transmembrane region" description="Helical" evidence="2">
    <location>
        <begin position="234"/>
        <end position="254"/>
    </location>
</feature>
<feature type="topological domain" description="Extracellular" evidence="2">
    <location>
        <begin position="255"/>
        <end position="267"/>
    </location>
</feature>
<feature type="transmembrane region" description="Helical" evidence="2">
    <location>
        <begin position="268"/>
        <end position="288"/>
    </location>
</feature>
<feature type="topological domain" description="Cytoplasmic" evidence="2">
    <location>
        <begin position="289"/>
        <end position="291"/>
    </location>
</feature>
<feature type="transmembrane region" description="Helical" evidence="2">
    <location>
        <begin position="292"/>
        <end position="312"/>
    </location>
</feature>
<feature type="topological domain" description="Extracellular" evidence="2">
    <location>
        <begin position="313"/>
        <end position="360"/>
    </location>
</feature>
<feature type="transmembrane region" description="Helical" evidence="2">
    <location>
        <begin position="361"/>
        <end position="381"/>
    </location>
</feature>
<feature type="topological domain" description="Cytoplasmic" evidence="2">
    <location>
        <begin position="382"/>
        <end position="437"/>
    </location>
</feature>
<feature type="region of interest" description="Disordered" evidence="3">
    <location>
        <begin position="16"/>
        <end position="84"/>
    </location>
</feature>
<feature type="compositionally biased region" description="Low complexity" evidence="3">
    <location>
        <begin position="21"/>
        <end position="50"/>
    </location>
</feature>
<feature type="site" description="Cleavage; by thrombin" evidence="1">
    <location>
        <begin position="87"/>
        <end position="88"/>
    </location>
</feature>
<feature type="glycosylation site" description="N-linked (GlcNAc...) asparagine" evidence="2">
    <location>
        <position position="6"/>
    </location>
</feature>
<feature type="glycosylation site" description="N-linked (GlcNAc...) asparagine" evidence="2">
    <location>
        <position position="20"/>
    </location>
</feature>
<feature type="glycosylation site" description="N-linked (GlcNAc...) asparagine" evidence="2">
    <location>
        <position position="26"/>
    </location>
</feature>
<feature type="glycosylation site" description="N-linked (GlcNAc...) asparagine" evidence="2">
    <location>
        <position position="181"/>
    </location>
</feature>
<feature type="glycosylation site" description="N-linked (GlcNAc...) asparagine" evidence="2">
    <location>
        <position position="195"/>
    </location>
</feature>
<dbReference type="EMBL" id="AY704415">
    <property type="protein sequence ID" value="AAW30131.1"/>
    <property type="molecule type" value="mRNA"/>
</dbReference>
<dbReference type="EMBL" id="AY825923">
    <property type="protein sequence ID" value="AAV80706.1"/>
    <property type="molecule type" value="mRNA"/>
</dbReference>
<dbReference type="RefSeq" id="NP_001008555.1">
    <property type="nucleotide sequence ID" value="NM_001008555.1"/>
</dbReference>
<dbReference type="SMR" id="Q5PT56"/>
<dbReference type="FunCoup" id="Q5PT56">
    <property type="interactions" value="66"/>
</dbReference>
<dbReference type="STRING" id="10116.ENSRNOP00000037495"/>
<dbReference type="GlyCosmos" id="Q5PT56">
    <property type="glycosylation" value="5 sites, No reported glycans"/>
</dbReference>
<dbReference type="GlyGen" id="Q5PT56">
    <property type="glycosylation" value="7 sites"/>
</dbReference>
<dbReference type="PhosphoSitePlus" id="Q5PT56"/>
<dbReference type="PaxDb" id="10116-ENSRNOP00000037495"/>
<dbReference type="GeneID" id="305309"/>
<dbReference type="KEGG" id="rno:305309"/>
<dbReference type="UCSC" id="RGD:1309536">
    <property type="organism name" value="rat"/>
</dbReference>
<dbReference type="AGR" id="RGD:1309536"/>
<dbReference type="CTD" id="201780"/>
<dbReference type="RGD" id="1309536">
    <property type="gene designation" value="Slc10a4"/>
</dbReference>
<dbReference type="eggNOG" id="KOG2718">
    <property type="taxonomic scope" value="Eukaryota"/>
</dbReference>
<dbReference type="InParanoid" id="Q5PT56"/>
<dbReference type="OrthoDB" id="203097at2759"/>
<dbReference type="PhylomeDB" id="Q5PT56"/>
<dbReference type="PRO" id="PR:Q5PT56"/>
<dbReference type="Proteomes" id="UP000002494">
    <property type="component" value="Unplaced"/>
</dbReference>
<dbReference type="GO" id="GO:0098981">
    <property type="term" value="C:cholinergic synapse"/>
    <property type="evidence" value="ECO:0000266"/>
    <property type="project" value="RGD"/>
</dbReference>
<dbReference type="GO" id="GO:0098691">
    <property type="term" value="C:dopaminergic synapse"/>
    <property type="evidence" value="ECO:0000266"/>
    <property type="project" value="RGD"/>
</dbReference>
<dbReference type="GO" id="GO:0005886">
    <property type="term" value="C:plasma membrane"/>
    <property type="evidence" value="ECO:0007669"/>
    <property type="project" value="UniProtKB-SubCell"/>
</dbReference>
<dbReference type="GO" id="GO:0099154">
    <property type="term" value="C:serotonergic synapse"/>
    <property type="evidence" value="ECO:0000266"/>
    <property type="project" value="RGD"/>
</dbReference>
<dbReference type="GO" id="GO:0030672">
    <property type="term" value="C:synaptic vesicle membrane"/>
    <property type="evidence" value="ECO:0000266"/>
    <property type="project" value="RGD"/>
</dbReference>
<dbReference type="GO" id="GO:0008508">
    <property type="term" value="F:bile acid:sodium symporter activity"/>
    <property type="evidence" value="ECO:0000318"/>
    <property type="project" value="GO_Central"/>
</dbReference>
<dbReference type="GO" id="GO:0030534">
    <property type="term" value="P:adult behavior"/>
    <property type="evidence" value="ECO:0000266"/>
    <property type="project" value="RGD"/>
</dbReference>
<dbReference type="GO" id="GO:0015721">
    <property type="term" value="P:bile acid and bile salt transport"/>
    <property type="evidence" value="ECO:0000318"/>
    <property type="project" value="GO_Central"/>
</dbReference>
<dbReference type="GO" id="GO:0099162">
    <property type="term" value="P:regulation of neurotransmitter loading into synaptic vesicle"/>
    <property type="evidence" value="ECO:0000266"/>
    <property type="project" value="RGD"/>
</dbReference>
<dbReference type="GO" id="GO:0009410">
    <property type="term" value="P:response to xenobiotic stimulus"/>
    <property type="evidence" value="ECO:0000266"/>
    <property type="project" value="RGD"/>
</dbReference>
<dbReference type="FunFam" id="1.20.1530.20:FF:000013">
    <property type="entry name" value="sodium/bile acid cotransporter 4"/>
    <property type="match status" value="1"/>
</dbReference>
<dbReference type="Gene3D" id="1.20.1530.20">
    <property type="match status" value="1"/>
</dbReference>
<dbReference type="InterPro" id="IPR002657">
    <property type="entry name" value="BilAc:Na_symport/Acr3"/>
</dbReference>
<dbReference type="InterPro" id="IPR004710">
    <property type="entry name" value="Bilac:Na_transpt"/>
</dbReference>
<dbReference type="InterPro" id="IPR038770">
    <property type="entry name" value="Na+/solute_symporter_sf"/>
</dbReference>
<dbReference type="PANTHER" id="PTHR10361">
    <property type="entry name" value="SODIUM-BILE ACID COTRANSPORTER"/>
    <property type="match status" value="1"/>
</dbReference>
<dbReference type="PANTHER" id="PTHR10361:SF41">
    <property type="entry name" value="SODIUM_BILE ACID COTRANSPORTER 4"/>
    <property type="match status" value="1"/>
</dbReference>
<dbReference type="Pfam" id="PF01758">
    <property type="entry name" value="SBF"/>
    <property type="match status" value="1"/>
</dbReference>
<keyword id="KW-1003">Cell membrane</keyword>
<keyword id="KW-0325">Glycoprotein</keyword>
<keyword id="KW-0406">Ion transport</keyword>
<keyword id="KW-0472">Membrane</keyword>
<keyword id="KW-1185">Reference proteome</keyword>
<keyword id="KW-0915">Sodium</keyword>
<keyword id="KW-0739">Sodium transport</keyword>
<keyword id="KW-0769">Symport</keyword>
<keyword id="KW-0812">Transmembrane</keyword>
<keyword id="KW-1133">Transmembrane helix</keyword>
<keyword id="KW-0813">Transport</keyword>
<gene>
    <name type="primary">Slc10a4</name>
</gene>
<proteinExistence type="evidence at protein level"/>
<sequence length="437" mass="46614">MDGLDNTTRLLAPSSLLPDNLTLSPNASSTSASTLSPLPVTSSPSPGLSLAPTPSIGFSPDLTPTPEPTSSSLAGGVAGQDSSTFPRPWIPHEPPFWDTPLNHGLNVFVGAALCITMLGLGCTVDVNHFGAHVRRPVGALLAALCQFGFLPLLAFLLALAFKLDEVAAVAVLLCGCCPGGNLSNLMSLLVDGDMNLSIIMTISSTLLALVLMPLCLWIYSRAWINTPLVQLLPLGAVTLTLCSTLIPIGLGVFIRYKYNRVADYIVKVSLCSLLVTLVVLFIMTGTMLGPELLASIPAAVYVVAIFMPLAGYASGYGLATLFHLPPNCKRTVCLETGSQNVQLCTAILKLAFPPRFIGSMYMFPLLYALFQSAEAGVFVLIYKMYGSEILHKREALDEDDDTDISYKKLKEEELADTSYGTVGTDDLVLMETTQTSL</sequence>
<accession>Q5PT56</accession>
<comment type="function">
    <text evidence="1">Transporter for bile acids.</text>
</comment>
<comment type="subcellular location">
    <subcellularLocation>
        <location evidence="1">Cell membrane</location>
        <topology evidence="1">Multi-pass membrane protein</topology>
    </subcellularLocation>
</comment>
<comment type="tissue specificity">
    <text evidence="4">Mainly expressed in the central nervous system cholinergic neurons. Expressed (at protein level) in motor regions of the spinal cord and rhombencephalon, in mesopontine cholinergic neurons, the medial habenula, cholinergic areas of the forebrain, and the gut myenteric plexus.</text>
</comment>
<comment type="PTM">
    <text evidence="1">Activated following N-terminal proteolytic cleavage by thrombin and/or proteases.</text>
</comment>
<comment type="similarity">
    <text evidence="5">Belongs to the bile acid:sodium symporter (BASS) (TC 2.A.28) family.</text>
</comment>